<evidence type="ECO:0000269" key="1">
    <source>
    </source>
</evidence>
<evidence type="ECO:0000303" key="2">
    <source>
    </source>
</evidence>
<evidence type="ECO:0000305" key="3"/>
<evidence type="ECO:0000305" key="4">
    <source>
    </source>
</evidence>
<evidence type="ECO:0000312" key="5">
    <source>
        <dbReference type="EMBL" id="AFM55025.1"/>
    </source>
</evidence>
<keyword id="KW-0903">Direct protein sequencing</keyword>
<keyword id="KW-1015">Disulfide bond</keyword>
<keyword id="KW-0528">Neurotoxin</keyword>
<keyword id="KW-0964">Secreted</keyword>
<keyword id="KW-0732">Signal</keyword>
<keyword id="KW-0800">Toxin</keyword>
<feature type="signal peptide" evidence="1">
    <location>
        <begin position="1"/>
        <end position="18"/>
    </location>
</feature>
<feature type="chain" id="PRO_0000425493" description="Putative neurotoxin 5" evidence="4">
    <location>
        <begin position="19"/>
        <end position="64"/>
    </location>
</feature>
<accession>I6S7I0</accession>
<reference key="1">
    <citation type="journal article" date="2012" name="Mol. Cell. Proteomics">
        <title>Chemical punch packed in venoms makes centipedes excellent predators.</title>
        <authorList>
            <person name="Yang S."/>
            <person name="Liu Z."/>
            <person name="Xiao Y."/>
            <person name="Li Y."/>
            <person name="Rong M."/>
            <person name="Liang S."/>
            <person name="Zhang Z."/>
            <person name="Yu H."/>
            <person name="King G.F."/>
            <person name="Lai R."/>
        </authorList>
    </citation>
    <scope>NUCLEOTIDE SEQUENCE [MRNA]</scope>
    <scope>PROTEIN SEQUENCE OF 19-43</scope>
    <scope>SUBCELLULAR LOCATION</scope>
    <source>
        <tissue>Venom</tissue>
        <tissue>Venom gland</tissue>
    </source>
</reference>
<protein>
    <recommendedName>
        <fullName evidence="2">Putative neurotoxin 5</fullName>
    </recommendedName>
    <alternativeName>
        <fullName evidence="5">Putative neurotoxin 6</fullName>
    </alternativeName>
</protein>
<sequence length="64" mass="6977">MKNKFAALVITLFVLVLAIDNVTTQCLEGCECNQESTGKTCRPKQGSNVSPAVCLAQYCYHGYC</sequence>
<dbReference type="EMBL" id="JQ757078">
    <property type="protein sequence ID" value="AFM55025.1"/>
    <property type="molecule type" value="mRNA"/>
</dbReference>
<dbReference type="GO" id="GO:0005576">
    <property type="term" value="C:extracellular region"/>
    <property type="evidence" value="ECO:0007669"/>
    <property type="project" value="UniProtKB-SubCell"/>
</dbReference>
<dbReference type="GO" id="GO:0090729">
    <property type="term" value="F:toxin activity"/>
    <property type="evidence" value="ECO:0007669"/>
    <property type="project" value="UniProtKB-KW"/>
</dbReference>
<name>PNX65_SCOMU</name>
<organism>
    <name type="scientific">Scolopendra mutilans</name>
    <name type="common">Chinese red-headed centipede</name>
    <name type="synonym">Scolopendra subspinipes mutilans</name>
    <dbReference type="NCBI Taxonomy" id="2836329"/>
    <lineage>
        <taxon>Eukaryota</taxon>
        <taxon>Metazoa</taxon>
        <taxon>Ecdysozoa</taxon>
        <taxon>Arthropoda</taxon>
        <taxon>Myriapoda</taxon>
        <taxon>Chilopoda</taxon>
        <taxon>Pleurostigmophora</taxon>
        <taxon>Scolopendromorpha</taxon>
        <taxon>Scolopendridae</taxon>
        <taxon>Scolopendra</taxon>
    </lineage>
</organism>
<proteinExistence type="evidence at protein level"/>
<comment type="subcellular location">
    <subcellularLocation>
        <location evidence="1">Secreted</location>
    </subcellularLocation>
</comment>
<comment type="tissue specificity">
    <text evidence="4">Expressed by the venom gland.</text>
</comment>
<comment type="PTM">
    <text evidence="3">Contains 3 disulfide bonds.</text>
</comment>
<comment type="similarity">
    <text evidence="3">Belongs to the scolopendra neurotoxin 6 family.</text>
</comment>